<gene>
    <name evidence="1" type="primary">hisS</name>
    <name type="ordered locus">Rmag_0671</name>
</gene>
<name>SYH_RUTMC</name>
<sequence>MSKKIQAIRGMSDLLPKDSAFWLSLERTIFDLFISYGYQNIRTPIVEKTDTFCRAIGGATDIVEKEMYSWIESGGESLSLNPEGTAGCVRMMIEHNLPREGIQKVFYQGAMFRRERPQKGRYRQFHQVGLEVFGATNAKVDAELMMITHTLWQVLGLKNIVLEINTLGSSETRVAYRKILIAYFNQYKDQLDENSLKRLKTNPLRILDSKNKAMRSLINNAPKLMDYLDKESAQHFEQFKTYLDALNVTYIINTCLVRGLDYYNRTVFEWTTTNLGAQGTICAGGRYDGLVEKMGGIPTPAVGLAIGLERLILLLEVQNLMAIEPTLSIYLVALGEKAQIKSMQIASTLHDALPNVILYNDLTLGSFKSQLKKANKIKAYFALILGEQELNNNQVSIKPLKGQGTQQTMDLEEAIKYLKENK</sequence>
<organism>
    <name type="scientific">Ruthia magnifica subsp. Calyptogena magnifica</name>
    <dbReference type="NCBI Taxonomy" id="413404"/>
    <lineage>
        <taxon>Bacteria</taxon>
        <taxon>Pseudomonadati</taxon>
        <taxon>Pseudomonadota</taxon>
        <taxon>Gammaproteobacteria</taxon>
        <taxon>Candidatus Pseudothioglobaceae</taxon>
        <taxon>Candidatus Ruthturnera</taxon>
    </lineage>
</organism>
<proteinExistence type="inferred from homology"/>
<keyword id="KW-0030">Aminoacyl-tRNA synthetase</keyword>
<keyword id="KW-0067">ATP-binding</keyword>
<keyword id="KW-0963">Cytoplasm</keyword>
<keyword id="KW-0436">Ligase</keyword>
<keyword id="KW-0547">Nucleotide-binding</keyword>
<keyword id="KW-0648">Protein biosynthesis</keyword>
<dbReference type="EC" id="6.1.1.21" evidence="1"/>
<dbReference type="EMBL" id="CP000488">
    <property type="protein sequence ID" value="ABL02413.1"/>
    <property type="molecule type" value="Genomic_DNA"/>
</dbReference>
<dbReference type="RefSeq" id="WP_011738038.1">
    <property type="nucleotide sequence ID" value="NC_008610.1"/>
</dbReference>
<dbReference type="SMR" id="A1AWV6"/>
<dbReference type="STRING" id="413404.Rmag_0671"/>
<dbReference type="KEGG" id="rma:Rmag_0671"/>
<dbReference type="eggNOG" id="COG0124">
    <property type="taxonomic scope" value="Bacteria"/>
</dbReference>
<dbReference type="HOGENOM" id="CLU_025113_1_1_6"/>
<dbReference type="OrthoDB" id="9800814at2"/>
<dbReference type="Proteomes" id="UP000002587">
    <property type="component" value="Chromosome"/>
</dbReference>
<dbReference type="GO" id="GO:0005737">
    <property type="term" value="C:cytoplasm"/>
    <property type="evidence" value="ECO:0007669"/>
    <property type="project" value="UniProtKB-SubCell"/>
</dbReference>
<dbReference type="GO" id="GO:0005524">
    <property type="term" value="F:ATP binding"/>
    <property type="evidence" value="ECO:0007669"/>
    <property type="project" value="UniProtKB-UniRule"/>
</dbReference>
<dbReference type="GO" id="GO:0004821">
    <property type="term" value="F:histidine-tRNA ligase activity"/>
    <property type="evidence" value="ECO:0007669"/>
    <property type="project" value="UniProtKB-UniRule"/>
</dbReference>
<dbReference type="GO" id="GO:0006427">
    <property type="term" value="P:histidyl-tRNA aminoacylation"/>
    <property type="evidence" value="ECO:0007669"/>
    <property type="project" value="UniProtKB-UniRule"/>
</dbReference>
<dbReference type="CDD" id="cd00773">
    <property type="entry name" value="HisRS-like_core"/>
    <property type="match status" value="1"/>
</dbReference>
<dbReference type="FunFam" id="3.30.930.10:FF:000005">
    <property type="entry name" value="Histidine--tRNA ligase"/>
    <property type="match status" value="1"/>
</dbReference>
<dbReference type="Gene3D" id="3.40.50.800">
    <property type="entry name" value="Anticodon-binding domain"/>
    <property type="match status" value="1"/>
</dbReference>
<dbReference type="Gene3D" id="3.30.930.10">
    <property type="entry name" value="Bira Bifunctional Protein, Domain 2"/>
    <property type="match status" value="1"/>
</dbReference>
<dbReference type="HAMAP" id="MF_00127">
    <property type="entry name" value="His_tRNA_synth"/>
    <property type="match status" value="1"/>
</dbReference>
<dbReference type="InterPro" id="IPR006195">
    <property type="entry name" value="aa-tRNA-synth_II"/>
</dbReference>
<dbReference type="InterPro" id="IPR045864">
    <property type="entry name" value="aa-tRNA-synth_II/BPL/LPL"/>
</dbReference>
<dbReference type="InterPro" id="IPR004154">
    <property type="entry name" value="Anticodon-bd"/>
</dbReference>
<dbReference type="InterPro" id="IPR036621">
    <property type="entry name" value="Anticodon-bd_dom_sf"/>
</dbReference>
<dbReference type="InterPro" id="IPR015807">
    <property type="entry name" value="His-tRNA-ligase"/>
</dbReference>
<dbReference type="InterPro" id="IPR041715">
    <property type="entry name" value="HisRS-like_core"/>
</dbReference>
<dbReference type="InterPro" id="IPR004516">
    <property type="entry name" value="HisRS/HisZ"/>
</dbReference>
<dbReference type="NCBIfam" id="TIGR00442">
    <property type="entry name" value="hisS"/>
    <property type="match status" value="1"/>
</dbReference>
<dbReference type="PANTHER" id="PTHR43707:SF1">
    <property type="entry name" value="HISTIDINE--TRNA LIGASE, MITOCHONDRIAL-RELATED"/>
    <property type="match status" value="1"/>
</dbReference>
<dbReference type="PANTHER" id="PTHR43707">
    <property type="entry name" value="HISTIDYL-TRNA SYNTHETASE"/>
    <property type="match status" value="1"/>
</dbReference>
<dbReference type="Pfam" id="PF03129">
    <property type="entry name" value="HGTP_anticodon"/>
    <property type="match status" value="1"/>
</dbReference>
<dbReference type="Pfam" id="PF13393">
    <property type="entry name" value="tRNA-synt_His"/>
    <property type="match status" value="1"/>
</dbReference>
<dbReference type="PIRSF" id="PIRSF001549">
    <property type="entry name" value="His-tRNA_synth"/>
    <property type="match status" value="1"/>
</dbReference>
<dbReference type="SUPFAM" id="SSF52954">
    <property type="entry name" value="Class II aaRS ABD-related"/>
    <property type="match status" value="1"/>
</dbReference>
<dbReference type="SUPFAM" id="SSF55681">
    <property type="entry name" value="Class II aaRS and biotin synthetases"/>
    <property type="match status" value="1"/>
</dbReference>
<dbReference type="PROSITE" id="PS50862">
    <property type="entry name" value="AA_TRNA_LIGASE_II"/>
    <property type="match status" value="1"/>
</dbReference>
<accession>A1AWV6</accession>
<evidence type="ECO:0000255" key="1">
    <source>
        <dbReference type="HAMAP-Rule" id="MF_00127"/>
    </source>
</evidence>
<protein>
    <recommendedName>
        <fullName evidence="1">Histidine--tRNA ligase</fullName>
        <ecNumber evidence="1">6.1.1.21</ecNumber>
    </recommendedName>
    <alternativeName>
        <fullName evidence="1">Histidyl-tRNA synthetase</fullName>
        <shortName evidence="1">HisRS</shortName>
    </alternativeName>
</protein>
<feature type="chain" id="PRO_1000016440" description="Histidine--tRNA ligase">
    <location>
        <begin position="1"/>
        <end position="422"/>
    </location>
</feature>
<reference key="1">
    <citation type="journal article" date="2007" name="Science">
        <title>The Calyptogena magnifica chemoautotrophic symbiont genome.</title>
        <authorList>
            <person name="Newton I.L.G."/>
            <person name="Woyke T."/>
            <person name="Auchtung T.A."/>
            <person name="Dilly G.F."/>
            <person name="Dutton R.J."/>
            <person name="Fisher M.C."/>
            <person name="Fontanez K.M."/>
            <person name="Lau E."/>
            <person name="Stewart F.J."/>
            <person name="Richardson P.M."/>
            <person name="Barry K.W."/>
            <person name="Saunders E."/>
            <person name="Detter J.C."/>
            <person name="Wu D."/>
            <person name="Eisen J.A."/>
            <person name="Cavanaugh C.M."/>
        </authorList>
    </citation>
    <scope>NUCLEOTIDE SEQUENCE [LARGE SCALE GENOMIC DNA]</scope>
</reference>
<comment type="catalytic activity">
    <reaction evidence="1">
        <text>tRNA(His) + L-histidine + ATP = L-histidyl-tRNA(His) + AMP + diphosphate + H(+)</text>
        <dbReference type="Rhea" id="RHEA:17313"/>
        <dbReference type="Rhea" id="RHEA-COMP:9665"/>
        <dbReference type="Rhea" id="RHEA-COMP:9689"/>
        <dbReference type="ChEBI" id="CHEBI:15378"/>
        <dbReference type="ChEBI" id="CHEBI:30616"/>
        <dbReference type="ChEBI" id="CHEBI:33019"/>
        <dbReference type="ChEBI" id="CHEBI:57595"/>
        <dbReference type="ChEBI" id="CHEBI:78442"/>
        <dbReference type="ChEBI" id="CHEBI:78527"/>
        <dbReference type="ChEBI" id="CHEBI:456215"/>
        <dbReference type="EC" id="6.1.1.21"/>
    </reaction>
</comment>
<comment type="subunit">
    <text evidence="1">Homodimer.</text>
</comment>
<comment type="subcellular location">
    <subcellularLocation>
        <location evidence="1">Cytoplasm</location>
    </subcellularLocation>
</comment>
<comment type="similarity">
    <text evidence="1">Belongs to the class-II aminoacyl-tRNA synthetase family.</text>
</comment>